<protein>
    <recommendedName>
        <fullName>Marginal zone B- and B1-cell-specific protein</fullName>
    </recommendedName>
    <alternativeName>
        <fullName>Plasma cell-induced resident endoplasmic reticulum protein</fullName>
        <shortName>Plasma cell-induced resident ER protein</shortName>
        <shortName>pERp1</shortName>
    </alternativeName>
    <alternativeName>
        <fullName>Proapoptotic caspase adapter protein</fullName>
    </alternativeName>
</protein>
<feature type="signal peptide" evidence="3">
    <location>
        <begin position="1"/>
        <end position="21"/>
    </location>
</feature>
<feature type="chain" id="PRO_0000318742" description="Marginal zone B- and B1-cell-specific protein">
    <location>
        <begin position="22"/>
        <end position="188"/>
    </location>
</feature>
<feature type="short sequence motif" description="Prevents secretion from ER" evidence="4">
    <location>
        <begin position="185"/>
        <end position="188"/>
    </location>
</feature>
<feature type="disulfide bond" evidence="1">
    <location>
        <begin position="49"/>
        <end position="177"/>
    </location>
</feature>
<feature type="disulfide bond" evidence="1">
    <location>
        <begin position="52"/>
        <end position="170"/>
    </location>
</feature>
<feature type="disulfide bond" evidence="1">
    <location>
        <begin position="94"/>
        <end position="142"/>
    </location>
</feature>
<keyword id="KW-1015">Disulfide bond</keyword>
<keyword id="KW-0256">Endoplasmic reticulum</keyword>
<keyword id="KW-1185">Reference proteome</keyword>
<keyword id="KW-0964">Secreted</keyword>
<keyword id="KW-0732">Signal</keyword>
<reference key="1">
    <citation type="journal article" date="2004" name="Genome Res.">
        <title>The status, quality, and expansion of the NIH full-length cDNA project: the Mammalian Gene Collection (MGC).</title>
        <authorList>
            <consortium name="The MGC Project Team"/>
        </authorList>
    </citation>
    <scope>NUCLEOTIDE SEQUENCE [LARGE SCALE MRNA]</scope>
    <source>
        <tissue>Thymus</tissue>
    </source>
</reference>
<dbReference type="EMBL" id="BC093397">
    <property type="protein sequence ID" value="AAH93397.1"/>
    <property type="molecule type" value="mRNA"/>
</dbReference>
<dbReference type="RefSeq" id="NP_001019411.1">
    <property type="nucleotide sequence ID" value="NM_001024240.1"/>
</dbReference>
<dbReference type="SMR" id="Q561R0"/>
<dbReference type="FunCoup" id="Q561R0">
    <property type="interactions" value="23"/>
</dbReference>
<dbReference type="STRING" id="10116.ENSRNOP00000030810"/>
<dbReference type="PhosphoSitePlus" id="Q561R0"/>
<dbReference type="PaxDb" id="10116-ENSRNOP00000030810"/>
<dbReference type="Ensembl" id="ENSRNOT00000036301.7">
    <property type="protein sequence ID" value="ENSRNOP00000030810.4"/>
    <property type="gene ID" value="ENSRNOG00000022009.7"/>
</dbReference>
<dbReference type="GeneID" id="291675"/>
<dbReference type="KEGG" id="rno:291675"/>
<dbReference type="UCSC" id="RGD:1310251">
    <property type="organism name" value="rat"/>
</dbReference>
<dbReference type="AGR" id="RGD:1310251"/>
<dbReference type="CTD" id="51237"/>
<dbReference type="RGD" id="1310251">
    <property type="gene designation" value="Mzb1"/>
</dbReference>
<dbReference type="eggNOG" id="ENOG502S4B7">
    <property type="taxonomic scope" value="Eukaryota"/>
</dbReference>
<dbReference type="GeneTree" id="ENSGT00390000002716"/>
<dbReference type="HOGENOM" id="CLU_113467_1_0_1"/>
<dbReference type="InParanoid" id="Q561R0"/>
<dbReference type="OMA" id="QNWQDYG"/>
<dbReference type="OrthoDB" id="448621at2759"/>
<dbReference type="PhylomeDB" id="Q561R0"/>
<dbReference type="TreeFam" id="TF329450"/>
<dbReference type="PRO" id="PR:Q561R0"/>
<dbReference type="Proteomes" id="UP000002494">
    <property type="component" value="Chromosome 18"/>
</dbReference>
<dbReference type="Bgee" id="ENSRNOG00000022009">
    <property type="expression patterns" value="Expressed in spleen and 15 other cell types or tissues"/>
</dbReference>
<dbReference type="GO" id="GO:0034663">
    <property type="term" value="C:endoplasmic reticulum chaperone complex"/>
    <property type="evidence" value="ECO:0000250"/>
    <property type="project" value="UniProtKB"/>
</dbReference>
<dbReference type="GO" id="GO:0005788">
    <property type="term" value="C:endoplasmic reticulum lumen"/>
    <property type="evidence" value="ECO:0000250"/>
    <property type="project" value="UniProtKB"/>
</dbReference>
<dbReference type="GO" id="GO:0005576">
    <property type="term" value="C:extracellular region"/>
    <property type="evidence" value="ECO:0000250"/>
    <property type="project" value="UniProtKB"/>
</dbReference>
<dbReference type="GO" id="GO:0033622">
    <property type="term" value="P:integrin activation"/>
    <property type="evidence" value="ECO:0000250"/>
    <property type="project" value="UniProtKB"/>
</dbReference>
<dbReference type="GO" id="GO:0008284">
    <property type="term" value="P:positive regulation of cell population proliferation"/>
    <property type="evidence" value="ECO:0000250"/>
    <property type="project" value="UniProtKB"/>
</dbReference>
<dbReference type="GO" id="GO:0002639">
    <property type="term" value="P:positive regulation of immunoglobulin production"/>
    <property type="evidence" value="ECO:0000250"/>
    <property type="project" value="UniProtKB"/>
</dbReference>
<dbReference type="GO" id="GO:0030888">
    <property type="term" value="P:regulation of B cell proliferation"/>
    <property type="evidence" value="ECO:0000250"/>
    <property type="project" value="UniProtKB"/>
</dbReference>
<dbReference type="GO" id="GO:0042127">
    <property type="term" value="P:regulation of cell population proliferation"/>
    <property type="evidence" value="ECO:0000250"/>
    <property type="project" value="UniProtKB"/>
</dbReference>
<dbReference type="GO" id="GO:0046626">
    <property type="term" value="P:regulation of insulin receptor signaling pathway"/>
    <property type="evidence" value="ECO:0000250"/>
    <property type="project" value="UniProtKB"/>
</dbReference>
<dbReference type="InterPro" id="IPR021852">
    <property type="entry name" value="DUF3456"/>
</dbReference>
<dbReference type="InterPro" id="IPR052682">
    <property type="entry name" value="MZB1"/>
</dbReference>
<dbReference type="PANTHER" id="PTHR15881">
    <property type="entry name" value="MARGINAL ZONE B- AND B1-CELL-SPECIFIC PROTEIN"/>
    <property type="match status" value="1"/>
</dbReference>
<dbReference type="PANTHER" id="PTHR15881:SF2">
    <property type="entry name" value="MARGINAL ZONE B- AND B1-CELL-SPECIFIC PROTEIN"/>
    <property type="match status" value="1"/>
</dbReference>
<dbReference type="Pfam" id="PF11938">
    <property type="entry name" value="DUF3456"/>
    <property type="match status" value="1"/>
</dbReference>
<dbReference type="PROSITE" id="PS00014">
    <property type="entry name" value="ER_TARGET"/>
    <property type="match status" value="1"/>
</dbReference>
<gene>
    <name type="primary">Mzb1</name>
    <name type="synonym">Pacap</name>
</gene>
<sequence length="188" mass="20712">MRLPLPLLLLFGCRAILGSFGDRVSLSATAPTLDDEEKYASHMPTHLRCDACRAVAYQMGQHLAKAEAKSHTPDSSGSQELSESTYTDVLDRTCSQNWQSYGVQEVNQMKRLMGPGLSKGPEPSISVMITGGPWPNRLSMTCFHYLGEFGEDQIYEAYRQGHETLEALLCGGTHGSCSQEIPAQREEL</sequence>
<comment type="function">
    <text evidence="1">Associates with immunoglobulin M (IgM) heavy and light chains and promotes IgM assembly and secretion. May exert its effect by acting as a molecular chaperone or as an oxidoreductase as it displays a low level of oxidoreductase activity (By similarity). Helps to diversify peripheral B-cell functions by regulating Ca(2+) stores, antibody secretion, and integrin activation.</text>
</comment>
<comment type="function">
    <text evidence="1">Acts as a hormone-regulated adipokine/pro-inflammatory cytokine that is implicated in causing chronic inflammation, affecting cellular expansion and blunting insulin response in adipocytes. May have a role in the onset of insulin resistance (By similarity).</text>
</comment>
<comment type="subunit">
    <text evidence="1">Part of the ER chaperone complex, a multi-protein complex in the endoplasmic reticulum containing a large number of molecular chaperones which associates with unassembled incompletely folded immunoglobulin heavy chains. Interacts with HSP90B1 and PDIA3 in a calcium-dependent manner.</text>
</comment>
<comment type="subcellular location">
    <subcellularLocation>
        <location evidence="2 4">Endoplasmic reticulum lumen</location>
    </subcellularLocation>
    <subcellularLocation>
        <location evidence="2">Secreted</location>
    </subcellularLocation>
</comment>
<comment type="PTM">
    <text evidence="1">Forms an interchain disulfide bond with IgM monomers.</text>
</comment>
<comment type="similarity">
    <text evidence="5">Belongs to the MZB1 family.</text>
</comment>
<organism>
    <name type="scientific">Rattus norvegicus</name>
    <name type="common">Rat</name>
    <dbReference type="NCBI Taxonomy" id="10116"/>
    <lineage>
        <taxon>Eukaryota</taxon>
        <taxon>Metazoa</taxon>
        <taxon>Chordata</taxon>
        <taxon>Craniata</taxon>
        <taxon>Vertebrata</taxon>
        <taxon>Euteleostomi</taxon>
        <taxon>Mammalia</taxon>
        <taxon>Eutheria</taxon>
        <taxon>Euarchontoglires</taxon>
        <taxon>Glires</taxon>
        <taxon>Rodentia</taxon>
        <taxon>Myomorpha</taxon>
        <taxon>Muroidea</taxon>
        <taxon>Muridae</taxon>
        <taxon>Murinae</taxon>
        <taxon>Rattus</taxon>
    </lineage>
</organism>
<accession>Q561R0</accession>
<name>MZB1_RAT</name>
<proteinExistence type="evidence at transcript level"/>
<evidence type="ECO:0000250" key="1"/>
<evidence type="ECO:0000250" key="2">
    <source>
        <dbReference type="UniProtKB" id="Q8WU39"/>
    </source>
</evidence>
<evidence type="ECO:0000255" key="3"/>
<evidence type="ECO:0000255" key="4">
    <source>
        <dbReference type="PROSITE-ProRule" id="PRU10138"/>
    </source>
</evidence>
<evidence type="ECO:0000305" key="5"/>